<sequence>MKKNQTMQGTFSKLFGKKHAHPSTTSLYATNPPWIFTHEAQEEGTRDFDGIYYGDNRFNTVSESGTATLKARPRVRPLLTFIPLNAQENHGLAVPTPSVPEDFADKEVGGTSTLVNGNLRLYSSVGDLRPACYDLDSSIPPPPPGPAPGPPQDISQPPGESPPPPPPSVPPPPPPPLLVEPPPPPSTAPPPPPPLDILSPPSTPTPPDFIPPAPPSAFLSPPPPSLPAPGPPAPVSLHTPGTHLFPPGAITKWKSEVALNGRHPEDPRTSPPKSPAELKRSPLGPSPEPHLTFPRSPKVPPPTPVRTSSIPVQEAPGASPEEEEATQKTSAPSPLPPSFNIRPASQIYPDRALEPEQPREPRPETPGSPRLRQSEPQTNGQAGAPPPAPPLPPPAPPLPPPAPSLPPAAPPLPSTELAAPPSSGFMKTSKSNSPALKPKPKPPSVEDTASSEPVDWRDPRQMEKLRSELSAYLCGTRKEDRSLSHRPGPTVALKDKENNKGTSLSEEAAPPSLPEKVHPCIPEKSPSSSSLPEREATSSLVLPPVDYIAQDTPAPSVRQIRSELEARFASSAEKEAKPSLASLPPKPRLEGGRTFENGTDNGRFHKPATKNPPQPSTTPLPTTILQPKVVPGPATSPKVTPGPATPFKPTPGQAILPKATPGLTLPLKPTPEQTTSPKNTPGKATPLKDTPGQATTPKDTPGQDTPPKDTPGQAAVLKNAPELSTPSSQLMAEKDLASVRQREKPETQEDPVATQLSTNGTLSPPALPPKMSTSGEEAPFLYRPHRSQNSHSRGVAVVTPTRARGEAPDSGDVVDEKELQNHPAKSLTPGQPADQLLRHPVTGEVVERGSPMALLLAARQRAQKTRTGGTAIGRSSLPGSLRDHSNQPEASSDSIFYRGSRPNSFIVVPKVPSETEDSHLTSARPTGPSHWKPQQGPDTQGSEPTYRHGWTKAETPAPVARERPAPSSLPQSRALPKSFSSPPSPSYKREEEEEEFSFDIIPPPPEFSNDPEPPAPGQQHQGRRGSPPRNNFSDLGQSWGPNPTPGFSRFRGTQYPESGGLDRFSGSGRSLIKKRLYVGESHRNPGMPRGSTGRSLSSPNCFGPQPGGPEMRRVNSAGRAAPGGLHARRLSLEGARGATEVKFKAPGGGGGSSSKAGDYGFVPAKGSRSPHGNTHYGSPINTFTVRPGTRHPISYAYPGTHRKATS</sequence>
<dbReference type="EMBL" id="AC139214">
    <property type="status" value="NOT_ANNOTATED_CDS"/>
    <property type="molecule type" value="Genomic_DNA"/>
</dbReference>
<dbReference type="EMBL" id="BC006605">
    <property type="protein sequence ID" value="AAH06605.1"/>
    <property type="molecule type" value="mRNA"/>
</dbReference>
<dbReference type="EMBL" id="BC029008">
    <property type="protein sequence ID" value="AAH29008.1"/>
    <property type="molecule type" value="mRNA"/>
</dbReference>
<dbReference type="CCDS" id="CCDS50131.1">
    <molecule id="Q91Z58-1"/>
</dbReference>
<dbReference type="RefSeq" id="NP_663464.2">
    <molecule id="Q91Z58-1"/>
    <property type="nucleotide sequence ID" value="NM_145489.3"/>
</dbReference>
<dbReference type="FunCoup" id="Q91Z58">
    <property type="interactions" value="2"/>
</dbReference>
<dbReference type="STRING" id="10090.ENSMUSP00000120133"/>
<dbReference type="GlyGen" id="Q91Z58">
    <property type="glycosylation" value="7 sites"/>
</dbReference>
<dbReference type="iPTMnet" id="Q91Z58"/>
<dbReference type="PhosphoSitePlus" id="Q91Z58"/>
<dbReference type="PaxDb" id="10090-ENSMUSP00000120133"/>
<dbReference type="PeptideAtlas" id="Q91Z58"/>
<dbReference type="Antibodypedia" id="52363">
    <property type="antibodies" value="39 antibodies from 8 providers"/>
</dbReference>
<dbReference type="DNASU" id="224833"/>
<dbReference type="Ensembl" id="ENSMUST00000037701.13">
    <molecule id="Q91Z58-2"/>
    <property type="protein sequence ID" value="ENSMUSP00000045345.7"/>
    <property type="gene ID" value="ENSMUSG00000034382.15"/>
</dbReference>
<dbReference type="Ensembl" id="ENSMUST00000150819.3">
    <molecule id="Q91Z58-1"/>
    <property type="protein sequence ID" value="ENSMUSP00000120133.3"/>
    <property type="gene ID" value="ENSMUSG00000034382.15"/>
</dbReference>
<dbReference type="GeneID" id="224833"/>
<dbReference type="KEGG" id="mmu:224833"/>
<dbReference type="UCSC" id="uc008cvg.2">
    <molecule id="Q91Z58-1"/>
    <property type="organism name" value="mouse"/>
</dbReference>
<dbReference type="AGR" id="MGI:2146908"/>
<dbReference type="MGI" id="MGI:2146908">
    <property type="gene designation" value="AI661453"/>
</dbReference>
<dbReference type="VEuPathDB" id="HostDB:ENSMUSG00000034382"/>
<dbReference type="eggNOG" id="ENOG502QQKX">
    <property type="taxonomic scope" value="Eukaryota"/>
</dbReference>
<dbReference type="GeneTree" id="ENSGT00940000163431"/>
<dbReference type="HOGENOM" id="CLU_106116_1_0_1"/>
<dbReference type="InParanoid" id="Q91Z58"/>
<dbReference type="OMA" id="GREEVPC"/>
<dbReference type="OrthoDB" id="9945848at2759"/>
<dbReference type="TreeFam" id="TF338477"/>
<dbReference type="BioGRID-ORCS" id="224833">
    <property type="hits" value="4 hits in 76 CRISPR screens"/>
</dbReference>
<dbReference type="PRO" id="PR:Q91Z58"/>
<dbReference type="Proteomes" id="UP000000589">
    <property type="component" value="Chromosome 17"/>
</dbReference>
<dbReference type="RNAct" id="Q91Z58">
    <property type="molecule type" value="protein"/>
</dbReference>
<dbReference type="Bgee" id="ENSMUSG00000034382">
    <property type="expression patterns" value="Expressed in lip and 124 other cell types or tissues"/>
</dbReference>
<dbReference type="PANTHER" id="PTHR35077">
    <property type="entry name" value="SIMILAR TO AI661453 PROTEIN"/>
    <property type="match status" value="1"/>
</dbReference>
<dbReference type="PANTHER" id="PTHR35077:SF2">
    <property type="entry name" value="SIMILAR TO AI661453 PROTEIN"/>
    <property type="match status" value="1"/>
</dbReference>
<proteinExistence type="evidence at protein level"/>
<feature type="chain" id="PRO_0000320613" description="Uncharacterized protein C6orf132 homolog">
    <location>
        <begin position="1"/>
        <end position="1206"/>
    </location>
</feature>
<feature type="region of interest" description="Disordered" evidence="2">
    <location>
        <begin position="133"/>
        <end position="547"/>
    </location>
</feature>
<feature type="region of interest" description="Disordered" evidence="2">
    <location>
        <begin position="568"/>
        <end position="837"/>
    </location>
</feature>
<feature type="region of interest" description="Disordered" evidence="2">
    <location>
        <begin position="859"/>
        <end position="1206"/>
    </location>
</feature>
<feature type="compositionally biased region" description="Pro residues" evidence="2">
    <location>
        <begin position="139"/>
        <end position="151"/>
    </location>
</feature>
<feature type="compositionally biased region" description="Pro residues" evidence="2">
    <location>
        <begin position="159"/>
        <end position="234"/>
    </location>
</feature>
<feature type="compositionally biased region" description="Low complexity" evidence="2">
    <location>
        <begin position="305"/>
        <end position="319"/>
    </location>
</feature>
<feature type="compositionally biased region" description="Basic and acidic residues" evidence="2">
    <location>
        <begin position="351"/>
        <end position="363"/>
    </location>
</feature>
<feature type="compositionally biased region" description="Pro residues" evidence="2">
    <location>
        <begin position="384"/>
        <end position="413"/>
    </location>
</feature>
<feature type="compositionally biased region" description="Low complexity" evidence="2">
    <location>
        <begin position="414"/>
        <end position="436"/>
    </location>
</feature>
<feature type="compositionally biased region" description="Basic and acidic residues" evidence="2">
    <location>
        <begin position="454"/>
        <end position="467"/>
    </location>
</feature>
<feature type="compositionally biased region" description="Low complexity" evidence="2">
    <location>
        <begin position="522"/>
        <end position="531"/>
    </location>
</feature>
<feature type="compositionally biased region" description="Basic and acidic residues" evidence="2">
    <location>
        <begin position="568"/>
        <end position="577"/>
    </location>
</feature>
<feature type="compositionally biased region" description="Low complexity" evidence="2">
    <location>
        <begin position="656"/>
        <end position="671"/>
    </location>
</feature>
<feature type="compositionally biased region" description="Basic and acidic residues" evidence="2">
    <location>
        <begin position="732"/>
        <end position="747"/>
    </location>
</feature>
<feature type="compositionally biased region" description="Pro residues" evidence="2">
    <location>
        <begin position="1001"/>
        <end position="1016"/>
    </location>
</feature>
<feature type="compositionally biased region" description="Polar residues" evidence="2">
    <location>
        <begin position="1028"/>
        <end position="1041"/>
    </location>
</feature>
<feature type="compositionally biased region" description="Polar residues" evidence="2">
    <location>
        <begin position="1170"/>
        <end position="1184"/>
    </location>
</feature>
<feature type="modified residue" description="Phosphoserine" evidence="4">
    <location>
        <position position="255"/>
    </location>
</feature>
<feature type="modified residue" description="Phosphothreonine" evidence="1">
    <location>
        <position position="680"/>
    </location>
</feature>
<feature type="modified residue" description="Omega-N-methylarginine" evidence="5">
    <location>
        <position position="1051"/>
    </location>
</feature>
<feature type="modified residue" description="Omega-N-methylarginine" evidence="1">
    <location>
        <position position="1083"/>
    </location>
</feature>
<feature type="modified residue" description="Omega-N-methylarginine" evidence="1">
    <location>
        <position position="1094"/>
    </location>
</feature>
<feature type="splice variant" id="VSP_034436" description="In isoform 2." evidence="3">
    <original>EPPPPPSTAPPPPP</original>
    <variation>GGRTRYYRSQLRHS</variation>
    <location>
        <begin position="180"/>
        <end position="193"/>
    </location>
</feature>
<feature type="splice variant" id="VSP_034437" description="In isoform 2." evidence="3">
    <location>
        <begin position="194"/>
        <end position="1206"/>
    </location>
</feature>
<name>CF132_MOUSE</name>
<protein>
    <recommendedName>
        <fullName>Uncharacterized protein C6orf132 homolog</fullName>
    </recommendedName>
</protein>
<accession>Q91Z58</accession>
<accession>Q8K108</accession>
<reference key="1">
    <citation type="journal article" date="2009" name="PLoS Biol.">
        <title>Lineage-specific biology revealed by a finished genome assembly of the mouse.</title>
        <authorList>
            <person name="Church D.M."/>
            <person name="Goodstadt L."/>
            <person name="Hillier L.W."/>
            <person name="Zody M.C."/>
            <person name="Goldstein S."/>
            <person name="She X."/>
            <person name="Bult C.J."/>
            <person name="Agarwala R."/>
            <person name="Cherry J.L."/>
            <person name="DiCuccio M."/>
            <person name="Hlavina W."/>
            <person name="Kapustin Y."/>
            <person name="Meric P."/>
            <person name="Maglott D."/>
            <person name="Birtle Z."/>
            <person name="Marques A.C."/>
            <person name="Graves T."/>
            <person name="Zhou S."/>
            <person name="Teague B."/>
            <person name="Potamousis K."/>
            <person name="Churas C."/>
            <person name="Place M."/>
            <person name="Herschleb J."/>
            <person name="Runnheim R."/>
            <person name="Forrest D."/>
            <person name="Amos-Landgraf J."/>
            <person name="Schwartz D.C."/>
            <person name="Cheng Z."/>
            <person name="Lindblad-Toh K."/>
            <person name="Eichler E.E."/>
            <person name="Ponting C.P."/>
        </authorList>
    </citation>
    <scope>NUCLEOTIDE SEQUENCE [LARGE SCALE GENOMIC DNA]</scope>
    <source>
        <strain>C57BL/6J</strain>
    </source>
</reference>
<reference key="2">
    <citation type="journal article" date="2004" name="Genome Res.">
        <title>The status, quality, and expansion of the NIH full-length cDNA project: the Mammalian Gene Collection (MGC).</title>
        <authorList>
            <consortium name="The MGC Project Team"/>
        </authorList>
    </citation>
    <scope>NUCLEOTIDE SEQUENCE [LARGE SCALE MRNA] (ISOFORM 2)</scope>
    <scope>NUCLEOTIDE SEQUENCE [LARGE SCALE MRNA] OF 1010-1206 (ISOFORM 1)</scope>
    <source>
        <strain>FVB/N</strain>
        <tissue>Liver</tissue>
        <tissue>Mammary tumor</tissue>
    </source>
</reference>
<reference key="3">
    <citation type="journal article" date="2010" name="Cell">
        <title>A tissue-specific atlas of mouse protein phosphorylation and expression.</title>
        <authorList>
            <person name="Huttlin E.L."/>
            <person name="Jedrychowski M.P."/>
            <person name="Elias J.E."/>
            <person name="Goswami T."/>
            <person name="Rad R."/>
            <person name="Beausoleil S.A."/>
            <person name="Villen J."/>
            <person name="Haas W."/>
            <person name="Sowa M.E."/>
            <person name="Gygi S.P."/>
        </authorList>
    </citation>
    <scope>PHOSPHORYLATION [LARGE SCALE ANALYSIS] AT SER-255</scope>
    <scope>IDENTIFICATION BY MASS SPECTROMETRY [LARGE SCALE ANALYSIS]</scope>
    <source>
        <tissue>Kidney</tissue>
        <tissue>Lung</tissue>
    </source>
</reference>
<reference key="4">
    <citation type="journal article" date="2014" name="Mol. Cell. Proteomics">
        <title>Immunoaffinity enrichment and mass spectrometry analysis of protein methylation.</title>
        <authorList>
            <person name="Guo A."/>
            <person name="Gu H."/>
            <person name="Zhou J."/>
            <person name="Mulhern D."/>
            <person name="Wang Y."/>
            <person name="Lee K.A."/>
            <person name="Yang V."/>
            <person name="Aguiar M."/>
            <person name="Kornhauser J."/>
            <person name="Jia X."/>
            <person name="Ren J."/>
            <person name="Beausoleil S.A."/>
            <person name="Silva J.C."/>
            <person name="Vemulapalli V."/>
            <person name="Bedford M.T."/>
            <person name="Comb M.J."/>
        </authorList>
    </citation>
    <scope>METHYLATION [LARGE SCALE ANALYSIS] AT ARG-1051</scope>
    <scope>IDENTIFICATION BY MASS SPECTROMETRY [LARGE SCALE ANALYSIS]</scope>
    <source>
        <tissue>Embryo</tissue>
    </source>
</reference>
<keyword id="KW-0025">Alternative splicing</keyword>
<keyword id="KW-0488">Methylation</keyword>
<keyword id="KW-0597">Phosphoprotein</keyword>
<keyword id="KW-1185">Reference proteome</keyword>
<evidence type="ECO:0000250" key="1">
    <source>
        <dbReference type="UniProtKB" id="Q5T0Z8"/>
    </source>
</evidence>
<evidence type="ECO:0000256" key="2">
    <source>
        <dbReference type="SAM" id="MobiDB-lite"/>
    </source>
</evidence>
<evidence type="ECO:0000303" key="3">
    <source>
    </source>
</evidence>
<evidence type="ECO:0007744" key="4">
    <source>
    </source>
</evidence>
<evidence type="ECO:0007744" key="5">
    <source>
    </source>
</evidence>
<comment type="alternative products">
    <event type="alternative splicing"/>
    <isoform>
        <id>Q91Z58-1</id>
        <name>1</name>
        <sequence type="displayed"/>
    </isoform>
    <isoform>
        <id>Q91Z58-2</id>
        <name>2</name>
        <sequence type="described" ref="VSP_034436 VSP_034437"/>
    </isoform>
</comment>
<organism>
    <name type="scientific">Mus musculus</name>
    <name type="common">Mouse</name>
    <dbReference type="NCBI Taxonomy" id="10090"/>
    <lineage>
        <taxon>Eukaryota</taxon>
        <taxon>Metazoa</taxon>
        <taxon>Chordata</taxon>
        <taxon>Craniata</taxon>
        <taxon>Vertebrata</taxon>
        <taxon>Euteleostomi</taxon>
        <taxon>Mammalia</taxon>
        <taxon>Eutheria</taxon>
        <taxon>Euarchontoglires</taxon>
        <taxon>Glires</taxon>
        <taxon>Rodentia</taxon>
        <taxon>Myomorpha</taxon>
        <taxon>Muroidea</taxon>
        <taxon>Muridae</taxon>
        <taxon>Murinae</taxon>
        <taxon>Mus</taxon>
        <taxon>Mus</taxon>
    </lineage>
</organism>